<keyword id="KW-0077">Bacteriochlorophyll biosynthesis</keyword>
<keyword id="KW-1003">Cell membrane</keyword>
<keyword id="KW-0149">Chlorophyll biosynthesis</keyword>
<keyword id="KW-0472">Membrane</keyword>
<keyword id="KW-0602">Photosynthesis</keyword>
<keyword id="KW-1185">Reference proteome</keyword>
<keyword id="KW-0812">Transmembrane</keyword>
<keyword id="KW-1133">Transmembrane helix</keyword>
<organism>
    <name type="scientific">Rhodobacter capsulatus (strain ATCC BAA-309 / NBRC 16581 / SB1003)</name>
    <dbReference type="NCBI Taxonomy" id="272942"/>
    <lineage>
        <taxon>Bacteria</taxon>
        <taxon>Pseudomonadati</taxon>
        <taxon>Pseudomonadota</taxon>
        <taxon>Alphaproteobacteria</taxon>
        <taxon>Rhodobacterales</taxon>
        <taxon>Rhodobacter group</taxon>
        <taxon>Rhodobacter</taxon>
    </lineage>
</organism>
<reference key="1">
    <citation type="submission" date="1991-11" db="EMBL/GenBank/DDBJ databases">
        <authorList>
            <person name="Burke D.H."/>
            <person name="Alberti M."/>
            <person name="Armstrong G.A."/>
            <person name="Hearst J.E."/>
        </authorList>
    </citation>
    <scope>NUCLEOTIDE SEQUENCE [GENOMIC DNA]</scope>
    <source>
        <strain>ATCC BAA-309 / NBRC 16581 / SB1003</strain>
    </source>
</reference>
<reference key="2">
    <citation type="journal article" date="2010" name="J. Bacteriol.">
        <title>Complete genome sequence of the photosynthetic purple nonsulfur bacterium Rhodobacter capsulatus SB 1003.</title>
        <authorList>
            <person name="Strnad H."/>
            <person name="Lapidus A."/>
            <person name="Paces J."/>
            <person name="Ulbrich P."/>
            <person name="Vlcek C."/>
            <person name="Paces V."/>
            <person name="Haselkorn R."/>
        </authorList>
    </citation>
    <scope>NUCLEOTIDE SEQUENCE [LARGE SCALE GENOMIC DNA]</scope>
    <source>
        <strain>ATCC BAA-309 / NBRC 16581 / SB1003</strain>
    </source>
</reference>
<sequence>MSAQDLSPSRRSIPEPRAMLELIKPVTWFPPMWAYLCGAVSSNVPIWENKGVVVLGIVLAGPIVCGMSQAANDWCDRHVDAINEPHRPIPSGRIPGLWGLYIAIAMSLLSLVVGWQLGSWGFVATLLGVAAAWAYSVEPIRLKRSGWWGPGLVGLAYEGLPWITGAAVLLATADTSPGFPIVMMATLYALGAHGIMTINDFKAIEGDRKLGIKSLPAVYGPEVAAKIACTVMGLAQALVITMLYLFSKPYHATAVLVLLCGQFWAMSVWMRDPEGKAPWYNGTGVVMYVSGMMITAFAIRGFTV</sequence>
<feature type="chain" id="PRO_0000064879" description="Bacteriochlorophyll synthase 33 kDa chain">
    <location>
        <begin position="1"/>
        <end position="304"/>
    </location>
</feature>
<feature type="transmembrane region" description="Helical" evidence="1">
    <location>
        <begin position="26"/>
        <end position="46"/>
    </location>
</feature>
<feature type="transmembrane region" description="Helical" evidence="1">
    <location>
        <begin position="51"/>
        <end position="71"/>
    </location>
</feature>
<feature type="transmembrane region" description="Helical" evidence="1">
    <location>
        <begin position="94"/>
        <end position="114"/>
    </location>
</feature>
<feature type="transmembrane region" description="Helical" evidence="1">
    <location>
        <begin position="117"/>
        <end position="137"/>
    </location>
</feature>
<feature type="transmembrane region" description="Helical" evidence="1">
    <location>
        <begin position="151"/>
        <end position="171"/>
    </location>
</feature>
<feature type="transmembrane region" description="Helical" evidence="1">
    <location>
        <begin position="178"/>
        <end position="198"/>
    </location>
</feature>
<feature type="transmembrane region" description="Helical" evidence="1">
    <location>
        <begin position="227"/>
        <end position="247"/>
    </location>
</feature>
<feature type="transmembrane region" description="Helical" evidence="1">
    <location>
        <begin position="250"/>
        <end position="270"/>
    </location>
</feature>
<feature type="transmembrane region" description="Helical" evidence="1">
    <location>
        <begin position="279"/>
        <end position="299"/>
    </location>
</feature>
<dbReference type="EMBL" id="Z11165">
    <property type="protein sequence ID" value="CAA77532.1"/>
    <property type="molecule type" value="Genomic_DNA"/>
</dbReference>
<dbReference type="EMBL" id="CP001312">
    <property type="protein sequence ID" value="ADE84436.1"/>
    <property type="molecule type" value="Genomic_DNA"/>
</dbReference>
<dbReference type="PIR" id="S17816">
    <property type="entry name" value="S17816"/>
</dbReference>
<dbReference type="SMR" id="P26170"/>
<dbReference type="STRING" id="272942.RCAP_rcc00671"/>
<dbReference type="GeneID" id="31489617"/>
<dbReference type="KEGG" id="rcp:RCAP_rcc00671"/>
<dbReference type="eggNOG" id="COG0382">
    <property type="taxonomic scope" value="Bacteria"/>
</dbReference>
<dbReference type="HOGENOM" id="CLU_042598_0_0_5"/>
<dbReference type="OrthoDB" id="8559716at2"/>
<dbReference type="BioCyc" id="MetaCyc:MONOMER-13260"/>
<dbReference type="UniPathway" id="UPA00671"/>
<dbReference type="Proteomes" id="UP000002361">
    <property type="component" value="Chromosome"/>
</dbReference>
<dbReference type="GO" id="GO:0005886">
    <property type="term" value="C:plasma membrane"/>
    <property type="evidence" value="ECO:0007669"/>
    <property type="project" value="UniProtKB-SubCell"/>
</dbReference>
<dbReference type="GO" id="GO:0016765">
    <property type="term" value="F:transferase activity, transferring alkyl or aryl (other than methyl) groups"/>
    <property type="evidence" value="ECO:0007669"/>
    <property type="project" value="InterPro"/>
</dbReference>
<dbReference type="GO" id="GO:0036070">
    <property type="term" value="P:light-independent bacteriochlorophyll biosynthetic process"/>
    <property type="evidence" value="ECO:0007669"/>
    <property type="project" value="UniProtKB-UniPathway"/>
</dbReference>
<dbReference type="GO" id="GO:0015979">
    <property type="term" value="P:photosynthesis"/>
    <property type="evidence" value="ECO:0007669"/>
    <property type="project" value="UniProtKB-KW"/>
</dbReference>
<dbReference type="CDD" id="cd13958">
    <property type="entry name" value="PT_UbiA_chlorophyll"/>
    <property type="match status" value="1"/>
</dbReference>
<dbReference type="Gene3D" id="1.10.357.140">
    <property type="entry name" value="UbiA prenyltransferase"/>
    <property type="match status" value="1"/>
</dbReference>
<dbReference type="Gene3D" id="1.20.120.1780">
    <property type="entry name" value="UbiA prenyltransferase"/>
    <property type="match status" value="1"/>
</dbReference>
<dbReference type="InterPro" id="IPR006372">
    <property type="entry name" value="Chl_synth"/>
</dbReference>
<dbReference type="InterPro" id="IPR050475">
    <property type="entry name" value="Prenyltransferase_related"/>
</dbReference>
<dbReference type="InterPro" id="IPR000537">
    <property type="entry name" value="UbiA_prenyltransferase"/>
</dbReference>
<dbReference type="InterPro" id="IPR044878">
    <property type="entry name" value="UbiA_sf"/>
</dbReference>
<dbReference type="NCBIfam" id="TIGR01476">
    <property type="entry name" value="chlor_syn_BchG"/>
    <property type="match status" value="1"/>
</dbReference>
<dbReference type="NCBIfam" id="NF005742">
    <property type="entry name" value="PRK07566.1"/>
    <property type="match status" value="1"/>
</dbReference>
<dbReference type="PANTHER" id="PTHR42723">
    <property type="entry name" value="CHLOROPHYLL SYNTHASE"/>
    <property type="match status" value="1"/>
</dbReference>
<dbReference type="PANTHER" id="PTHR42723:SF1">
    <property type="entry name" value="CHLOROPHYLL SYNTHASE, CHLOROPLASTIC"/>
    <property type="match status" value="1"/>
</dbReference>
<dbReference type="Pfam" id="PF01040">
    <property type="entry name" value="UbiA"/>
    <property type="match status" value="1"/>
</dbReference>
<accession>P26170</accession>
<accession>D5ANT2</accession>
<evidence type="ECO:0000255" key="1"/>
<evidence type="ECO:0000305" key="2"/>
<gene>
    <name type="primary">bchG</name>
    <name type="ordered locus">RCAP_rcc00671</name>
</gene>
<comment type="function">
    <text>Catalyzes the esterification of bacteriochlorophyllide a by geranylgeraniol-PPi.</text>
</comment>
<comment type="pathway">
    <text>Porphyrin-containing compound metabolism; bacteriochlorophyll biosynthesis (light-independent).</text>
</comment>
<comment type="subcellular location">
    <subcellularLocation>
        <location evidence="2">Cell membrane</location>
        <topology evidence="2">Multi-pass membrane protein</topology>
    </subcellularLocation>
</comment>
<name>BCHG_RHOCB</name>
<protein>
    <recommendedName>
        <fullName>Bacteriochlorophyll synthase 33 kDa chain</fullName>
    </recommendedName>
    <alternativeName>
        <fullName>Geranylgeranyl bacteriochlorophyll synthase</fullName>
    </alternativeName>
</protein>
<proteinExistence type="predicted"/>